<dbReference type="EC" id="1.17.1.8" evidence="1"/>
<dbReference type="EMBL" id="CP000557">
    <property type="protein sequence ID" value="ABO67471.1"/>
    <property type="molecule type" value="Genomic_DNA"/>
</dbReference>
<dbReference type="RefSeq" id="WP_008879593.1">
    <property type="nucleotide sequence ID" value="NC_009328.1"/>
</dbReference>
<dbReference type="SMR" id="A4IQ67"/>
<dbReference type="GeneID" id="87623781"/>
<dbReference type="KEGG" id="gtn:GTNG_2119"/>
<dbReference type="eggNOG" id="COG0289">
    <property type="taxonomic scope" value="Bacteria"/>
</dbReference>
<dbReference type="HOGENOM" id="CLU_047479_0_1_9"/>
<dbReference type="UniPathway" id="UPA00034">
    <property type="reaction ID" value="UER00018"/>
</dbReference>
<dbReference type="Proteomes" id="UP000001578">
    <property type="component" value="Chromosome"/>
</dbReference>
<dbReference type="GO" id="GO:0005829">
    <property type="term" value="C:cytosol"/>
    <property type="evidence" value="ECO:0007669"/>
    <property type="project" value="TreeGrafter"/>
</dbReference>
<dbReference type="GO" id="GO:0008839">
    <property type="term" value="F:4-hydroxy-tetrahydrodipicolinate reductase"/>
    <property type="evidence" value="ECO:0007669"/>
    <property type="project" value="UniProtKB-EC"/>
</dbReference>
<dbReference type="GO" id="GO:0051287">
    <property type="term" value="F:NAD binding"/>
    <property type="evidence" value="ECO:0007669"/>
    <property type="project" value="UniProtKB-UniRule"/>
</dbReference>
<dbReference type="GO" id="GO:0050661">
    <property type="term" value="F:NADP binding"/>
    <property type="evidence" value="ECO:0007669"/>
    <property type="project" value="UniProtKB-UniRule"/>
</dbReference>
<dbReference type="GO" id="GO:0016726">
    <property type="term" value="F:oxidoreductase activity, acting on CH or CH2 groups, NAD or NADP as acceptor"/>
    <property type="evidence" value="ECO:0007669"/>
    <property type="project" value="UniProtKB-UniRule"/>
</dbReference>
<dbReference type="GO" id="GO:0019877">
    <property type="term" value="P:diaminopimelate biosynthetic process"/>
    <property type="evidence" value="ECO:0007669"/>
    <property type="project" value="UniProtKB-UniRule"/>
</dbReference>
<dbReference type="GO" id="GO:0009089">
    <property type="term" value="P:lysine biosynthetic process via diaminopimelate"/>
    <property type="evidence" value="ECO:0007669"/>
    <property type="project" value="UniProtKB-UniRule"/>
</dbReference>
<dbReference type="CDD" id="cd02274">
    <property type="entry name" value="DHDPR_N"/>
    <property type="match status" value="1"/>
</dbReference>
<dbReference type="FunFam" id="3.30.360.10:FF:000009">
    <property type="entry name" value="4-hydroxy-tetrahydrodipicolinate reductase"/>
    <property type="match status" value="1"/>
</dbReference>
<dbReference type="FunFam" id="3.40.50.720:FF:000180">
    <property type="entry name" value="4-hydroxy-tetrahydrodipicolinate reductase"/>
    <property type="match status" value="1"/>
</dbReference>
<dbReference type="Gene3D" id="3.30.360.10">
    <property type="entry name" value="Dihydrodipicolinate Reductase, domain 2"/>
    <property type="match status" value="1"/>
</dbReference>
<dbReference type="Gene3D" id="3.40.50.720">
    <property type="entry name" value="NAD(P)-binding Rossmann-like Domain"/>
    <property type="match status" value="1"/>
</dbReference>
<dbReference type="HAMAP" id="MF_00102">
    <property type="entry name" value="DapB"/>
    <property type="match status" value="1"/>
</dbReference>
<dbReference type="InterPro" id="IPR022663">
    <property type="entry name" value="DapB_C"/>
</dbReference>
<dbReference type="InterPro" id="IPR000846">
    <property type="entry name" value="DapB_N"/>
</dbReference>
<dbReference type="InterPro" id="IPR022664">
    <property type="entry name" value="DapB_N_CS"/>
</dbReference>
<dbReference type="InterPro" id="IPR023940">
    <property type="entry name" value="DHDPR_bac"/>
</dbReference>
<dbReference type="InterPro" id="IPR036291">
    <property type="entry name" value="NAD(P)-bd_dom_sf"/>
</dbReference>
<dbReference type="NCBIfam" id="TIGR00036">
    <property type="entry name" value="dapB"/>
    <property type="match status" value="1"/>
</dbReference>
<dbReference type="PANTHER" id="PTHR20836:SF0">
    <property type="entry name" value="4-HYDROXY-TETRAHYDRODIPICOLINATE REDUCTASE 1, CHLOROPLASTIC-RELATED"/>
    <property type="match status" value="1"/>
</dbReference>
<dbReference type="PANTHER" id="PTHR20836">
    <property type="entry name" value="DIHYDRODIPICOLINATE REDUCTASE"/>
    <property type="match status" value="1"/>
</dbReference>
<dbReference type="Pfam" id="PF05173">
    <property type="entry name" value="DapB_C"/>
    <property type="match status" value="1"/>
</dbReference>
<dbReference type="Pfam" id="PF01113">
    <property type="entry name" value="DapB_N"/>
    <property type="match status" value="1"/>
</dbReference>
<dbReference type="PIRSF" id="PIRSF000161">
    <property type="entry name" value="DHPR"/>
    <property type="match status" value="1"/>
</dbReference>
<dbReference type="SUPFAM" id="SSF55347">
    <property type="entry name" value="Glyceraldehyde-3-phosphate dehydrogenase-like, C-terminal domain"/>
    <property type="match status" value="1"/>
</dbReference>
<dbReference type="SUPFAM" id="SSF51735">
    <property type="entry name" value="NAD(P)-binding Rossmann-fold domains"/>
    <property type="match status" value="1"/>
</dbReference>
<dbReference type="PROSITE" id="PS01298">
    <property type="entry name" value="DAPB"/>
    <property type="match status" value="1"/>
</dbReference>
<accession>A4IQ67</accession>
<sequence length="265" mass="29069">MTIRIVIAGPRGRMGREAVALVQRTDHFELAAVIDRRYDGQNLADIDGFAGIDAPIYTDAVRCFTEVKPDVLIDLTTPEVGKRHAELALRYGVRPVIGTTGFTPEDIERLTELAETNEIGAIIAPNFAVGAVLMMKFARMAAKYFTDVEIIELHHDQKLDAPSGTALKTAQLIAEVRPSKKQGHPDEKETLAGARGAAYDGIPIHSVRLPGFVAHQEVIFGGEGQTLTIRHDSLDRRSFMSGVKLAVETVMHLHTLVYGLEHILE</sequence>
<comment type="function">
    <text evidence="1">Catalyzes the conversion of 4-hydroxy-tetrahydrodipicolinate (HTPA) to tetrahydrodipicolinate.</text>
</comment>
<comment type="catalytic activity">
    <reaction evidence="1">
        <text>(S)-2,3,4,5-tetrahydrodipicolinate + NAD(+) + H2O = (2S,4S)-4-hydroxy-2,3,4,5-tetrahydrodipicolinate + NADH + H(+)</text>
        <dbReference type="Rhea" id="RHEA:35323"/>
        <dbReference type="ChEBI" id="CHEBI:15377"/>
        <dbReference type="ChEBI" id="CHEBI:15378"/>
        <dbReference type="ChEBI" id="CHEBI:16845"/>
        <dbReference type="ChEBI" id="CHEBI:57540"/>
        <dbReference type="ChEBI" id="CHEBI:57945"/>
        <dbReference type="ChEBI" id="CHEBI:67139"/>
        <dbReference type="EC" id="1.17.1.8"/>
    </reaction>
</comment>
<comment type="catalytic activity">
    <reaction evidence="1">
        <text>(S)-2,3,4,5-tetrahydrodipicolinate + NADP(+) + H2O = (2S,4S)-4-hydroxy-2,3,4,5-tetrahydrodipicolinate + NADPH + H(+)</text>
        <dbReference type="Rhea" id="RHEA:35331"/>
        <dbReference type="ChEBI" id="CHEBI:15377"/>
        <dbReference type="ChEBI" id="CHEBI:15378"/>
        <dbReference type="ChEBI" id="CHEBI:16845"/>
        <dbReference type="ChEBI" id="CHEBI:57783"/>
        <dbReference type="ChEBI" id="CHEBI:58349"/>
        <dbReference type="ChEBI" id="CHEBI:67139"/>
        <dbReference type="EC" id="1.17.1.8"/>
    </reaction>
</comment>
<comment type="pathway">
    <text evidence="1">Amino-acid biosynthesis; L-lysine biosynthesis via DAP pathway; (S)-tetrahydrodipicolinate from L-aspartate: step 4/4.</text>
</comment>
<comment type="subcellular location">
    <subcellularLocation>
        <location evidence="1">Cytoplasm</location>
    </subcellularLocation>
</comment>
<comment type="similarity">
    <text evidence="1">Belongs to the DapB family.</text>
</comment>
<comment type="caution">
    <text evidence="2">Was originally thought to be a dihydrodipicolinate reductase (DHDPR), catalyzing the conversion of dihydrodipicolinate to tetrahydrodipicolinate. However, it was shown in E.coli that the substrate of the enzymatic reaction is not dihydrodipicolinate (DHDP) but in fact (2S,4S)-4-hydroxy-2,3,4,5-tetrahydrodipicolinic acid (HTPA), the product released by the DapA-catalyzed reaction.</text>
</comment>
<protein>
    <recommendedName>
        <fullName evidence="1">4-hydroxy-tetrahydrodipicolinate reductase</fullName>
        <shortName evidence="1">HTPA reductase</shortName>
        <ecNumber evidence="1">1.17.1.8</ecNumber>
    </recommendedName>
</protein>
<evidence type="ECO:0000255" key="1">
    <source>
        <dbReference type="HAMAP-Rule" id="MF_00102"/>
    </source>
</evidence>
<evidence type="ECO:0000305" key="2"/>
<gene>
    <name evidence="1" type="primary">dapB</name>
    <name type="ordered locus">GTNG_2119</name>
</gene>
<feature type="chain" id="PRO_1000008565" description="4-hydroxy-tetrahydrodipicolinate reductase">
    <location>
        <begin position="1"/>
        <end position="265"/>
    </location>
</feature>
<feature type="active site" description="Proton donor/acceptor" evidence="1">
    <location>
        <position position="154"/>
    </location>
</feature>
<feature type="active site" description="Proton donor" evidence="1">
    <location>
        <position position="158"/>
    </location>
</feature>
<feature type="binding site" evidence="1">
    <location>
        <begin position="9"/>
        <end position="14"/>
    </location>
    <ligand>
        <name>NAD(+)</name>
        <dbReference type="ChEBI" id="CHEBI:57540"/>
    </ligand>
</feature>
<feature type="binding site" evidence="1">
    <location>
        <position position="37"/>
    </location>
    <ligand>
        <name>NADP(+)</name>
        <dbReference type="ChEBI" id="CHEBI:58349"/>
    </ligand>
</feature>
<feature type="binding site" evidence="1">
    <location>
        <begin position="98"/>
        <end position="100"/>
    </location>
    <ligand>
        <name>NAD(+)</name>
        <dbReference type="ChEBI" id="CHEBI:57540"/>
    </ligand>
</feature>
<feature type="binding site" evidence="1">
    <location>
        <begin position="124"/>
        <end position="127"/>
    </location>
    <ligand>
        <name>NAD(+)</name>
        <dbReference type="ChEBI" id="CHEBI:57540"/>
    </ligand>
</feature>
<feature type="binding site" evidence="1">
    <location>
        <position position="155"/>
    </location>
    <ligand>
        <name>(S)-2,3,4,5-tetrahydrodipicolinate</name>
        <dbReference type="ChEBI" id="CHEBI:16845"/>
    </ligand>
</feature>
<feature type="binding site" evidence="1">
    <location>
        <begin position="164"/>
        <end position="165"/>
    </location>
    <ligand>
        <name>(S)-2,3,4,5-tetrahydrodipicolinate</name>
        <dbReference type="ChEBI" id="CHEBI:16845"/>
    </ligand>
</feature>
<organism>
    <name type="scientific">Geobacillus thermodenitrificans (strain NG80-2)</name>
    <dbReference type="NCBI Taxonomy" id="420246"/>
    <lineage>
        <taxon>Bacteria</taxon>
        <taxon>Bacillati</taxon>
        <taxon>Bacillota</taxon>
        <taxon>Bacilli</taxon>
        <taxon>Bacillales</taxon>
        <taxon>Anoxybacillaceae</taxon>
        <taxon>Geobacillus</taxon>
    </lineage>
</organism>
<keyword id="KW-0028">Amino-acid biosynthesis</keyword>
<keyword id="KW-0963">Cytoplasm</keyword>
<keyword id="KW-0220">Diaminopimelate biosynthesis</keyword>
<keyword id="KW-0457">Lysine biosynthesis</keyword>
<keyword id="KW-0520">NAD</keyword>
<keyword id="KW-0521">NADP</keyword>
<keyword id="KW-0560">Oxidoreductase</keyword>
<name>DAPB_GEOTN</name>
<proteinExistence type="inferred from homology"/>
<reference key="1">
    <citation type="journal article" date="2007" name="Proc. Natl. Acad. Sci. U.S.A.">
        <title>Genome and proteome of long-chain alkane degrading Geobacillus thermodenitrificans NG80-2 isolated from a deep-subsurface oil reservoir.</title>
        <authorList>
            <person name="Feng L."/>
            <person name="Wang W."/>
            <person name="Cheng J."/>
            <person name="Ren Y."/>
            <person name="Zhao G."/>
            <person name="Gao C."/>
            <person name="Tang Y."/>
            <person name="Liu X."/>
            <person name="Han W."/>
            <person name="Peng X."/>
            <person name="Liu R."/>
            <person name="Wang L."/>
        </authorList>
    </citation>
    <scope>NUCLEOTIDE SEQUENCE [LARGE SCALE GENOMIC DNA]</scope>
    <source>
        <strain>NG80-2</strain>
    </source>
</reference>